<accession>Q01693</accession>
<dbReference type="EC" id="3.4.11.10"/>
<dbReference type="EMBL" id="Z11993">
    <property type="protein sequence ID" value="CAA78039.1"/>
    <property type="molecule type" value="Genomic_DNA"/>
</dbReference>
<dbReference type="EMBL" id="M85159">
    <property type="protein sequence ID" value="AAA21940.1"/>
    <property type="molecule type" value="Genomic_DNA"/>
</dbReference>
<dbReference type="PIR" id="S24314">
    <property type="entry name" value="S24314"/>
</dbReference>
<dbReference type="RefSeq" id="WP_021703410.1">
    <property type="nucleotide sequence ID" value="NZ_BAABTA010000001.1"/>
</dbReference>
<dbReference type="PDB" id="1AMP">
    <property type="method" value="X-ray"/>
    <property type="resolution" value="1.80 A"/>
    <property type="chains" value="A=107-397"/>
</dbReference>
<dbReference type="PDB" id="1CP6">
    <property type="method" value="X-ray"/>
    <property type="resolution" value="1.90 A"/>
    <property type="chains" value="A=107-397"/>
</dbReference>
<dbReference type="PDB" id="1FT7">
    <property type="method" value="X-ray"/>
    <property type="resolution" value="2.20 A"/>
    <property type="chains" value="A=107-397"/>
</dbReference>
<dbReference type="PDB" id="1IGB">
    <property type="method" value="X-ray"/>
    <property type="resolution" value="2.30 A"/>
    <property type="chains" value="A=107-397"/>
</dbReference>
<dbReference type="PDB" id="1LOK">
    <property type="method" value="X-ray"/>
    <property type="resolution" value="1.20 A"/>
    <property type="chains" value="A=107-397"/>
</dbReference>
<dbReference type="PDB" id="1RTQ">
    <property type="method" value="X-ray"/>
    <property type="resolution" value="0.95 A"/>
    <property type="chains" value="A=107-405"/>
</dbReference>
<dbReference type="PDB" id="1TXR">
    <property type="method" value="X-ray"/>
    <property type="resolution" value="2.00 A"/>
    <property type="chains" value="A=107-405"/>
</dbReference>
<dbReference type="PDB" id="1XRY">
    <property type="method" value="X-ray"/>
    <property type="resolution" value="2.10 A"/>
    <property type="chains" value="A=107-405"/>
</dbReference>
<dbReference type="PDB" id="2ANP">
    <property type="method" value="X-ray"/>
    <property type="resolution" value="1.90 A"/>
    <property type="chains" value="A=107-397"/>
</dbReference>
<dbReference type="PDB" id="2DEA">
    <property type="method" value="X-ray"/>
    <property type="resolution" value="1.24 A"/>
    <property type="chains" value="A=107-405"/>
</dbReference>
<dbReference type="PDB" id="2IQ6">
    <property type="method" value="X-ray"/>
    <property type="resolution" value="2.00 A"/>
    <property type="chains" value="A=107-397"/>
</dbReference>
<dbReference type="PDB" id="2NYQ">
    <property type="method" value="X-ray"/>
    <property type="resolution" value="2.50 A"/>
    <property type="chains" value="A=107-405"/>
</dbReference>
<dbReference type="PDB" id="2PRQ">
    <property type="method" value="X-ray"/>
    <property type="resolution" value="2.15 A"/>
    <property type="chains" value="A=107-397"/>
</dbReference>
<dbReference type="PDB" id="3B35">
    <property type="method" value="X-ray"/>
    <property type="resolution" value="1.10 A"/>
    <property type="chains" value="A=107-397"/>
</dbReference>
<dbReference type="PDB" id="3B3C">
    <property type="method" value="X-ray"/>
    <property type="resolution" value="1.46 A"/>
    <property type="chains" value="A=107-397"/>
</dbReference>
<dbReference type="PDB" id="3B3S">
    <property type="method" value="X-ray"/>
    <property type="resolution" value="1.18 A"/>
    <property type="chains" value="A=107-397"/>
</dbReference>
<dbReference type="PDB" id="3B3T">
    <property type="method" value="X-ray"/>
    <property type="resolution" value="1.17 A"/>
    <property type="chains" value="A=107-397"/>
</dbReference>
<dbReference type="PDB" id="3B3V">
    <property type="method" value="X-ray"/>
    <property type="resolution" value="1.22 A"/>
    <property type="chains" value="A=107-397"/>
</dbReference>
<dbReference type="PDB" id="3B3W">
    <property type="method" value="X-ray"/>
    <property type="resolution" value="1.75 A"/>
    <property type="chains" value="A=107-397"/>
</dbReference>
<dbReference type="PDB" id="3B7I">
    <property type="method" value="X-ray"/>
    <property type="resolution" value="1.75 A"/>
    <property type="chains" value="A=107-397"/>
</dbReference>
<dbReference type="PDB" id="3FH4">
    <property type="method" value="X-ray"/>
    <property type="resolution" value="1.95 A"/>
    <property type="chains" value="A=107-405"/>
</dbReference>
<dbReference type="PDB" id="3VH9">
    <property type="method" value="X-ray"/>
    <property type="resolution" value="1.29 A"/>
    <property type="chains" value="A=107-405"/>
</dbReference>
<dbReference type="PDBsum" id="1AMP"/>
<dbReference type="PDBsum" id="1CP6"/>
<dbReference type="PDBsum" id="1FT7"/>
<dbReference type="PDBsum" id="1IGB"/>
<dbReference type="PDBsum" id="1LOK"/>
<dbReference type="PDBsum" id="1RTQ"/>
<dbReference type="PDBsum" id="1TXR"/>
<dbReference type="PDBsum" id="1XRY"/>
<dbReference type="PDBsum" id="2ANP"/>
<dbReference type="PDBsum" id="2DEA"/>
<dbReference type="PDBsum" id="2IQ6"/>
<dbReference type="PDBsum" id="2NYQ"/>
<dbReference type="PDBsum" id="2PRQ"/>
<dbReference type="PDBsum" id="3B35"/>
<dbReference type="PDBsum" id="3B3C"/>
<dbReference type="PDBsum" id="3B3S"/>
<dbReference type="PDBsum" id="3B3T"/>
<dbReference type="PDBsum" id="3B3V"/>
<dbReference type="PDBsum" id="3B3W"/>
<dbReference type="PDBsum" id="3B7I"/>
<dbReference type="PDBsum" id="3FH4"/>
<dbReference type="PDBsum" id="3VH9"/>
<dbReference type="SMR" id="Q01693"/>
<dbReference type="BindingDB" id="Q01693"/>
<dbReference type="ChEMBL" id="CHEMBL3750"/>
<dbReference type="DrugBank" id="DB02664">
    <property type="generic name" value="1-Butane Boronic Acid"/>
</dbReference>
<dbReference type="DrugBank" id="DB02386">
    <property type="generic name" value="Leucine Phosphonic Acid"/>
</dbReference>
<dbReference type="DrugBank" id="DB01980">
    <property type="generic name" value="Para-Iodo-D-Phenylalanine Hydroxamic Acid"/>
</dbReference>
<dbReference type="DrugBank" id="DB03424">
    <property type="generic name" value="Ubenimex"/>
</dbReference>
<dbReference type="DrugCentral" id="Q01693"/>
<dbReference type="MEROPS" id="M28.002"/>
<dbReference type="BRENDA" id="3.4.11.10">
    <property type="organism ID" value="167"/>
</dbReference>
<dbReference type="SABIO-RK" id="Q01693"/>
<dbReference type="EvolutionaryTrace" id="Q01693"/>
<dbReference type="GO" id="GO:0005576">
    <property type="term" value="C:extracellular region"/>
    <property type="evidence" value="ECO:0007669"/>
    <property type="project" value="UniProtKB-SubCell"/>
</dbReference>
<dbReference type="GO" id="GO:0004177">
    <property type="term" value="F:aminopeptidase activity"/>
    <property type="evidence" value="ECO:0007669"/>
    <property type="project" value="UniProtKB-KW"/>
</dbReference>
<dbReference type="GO" id="GO:0046872">
    <property type="term" value="F:metal ion binding"/>
    <property type="evidence" value="ECO:0007669"/>
    <property type="project" value="UniProtKB-KW"/>
</dbReference>
<dbReference type="GO" id="GO:0008235">
    <property type="term" value="F:metalloexopeptidase activity"/>
    <property type="evidence" value="ECO:0007669"/>
    <property type="project" value="InterPro"/>
</dbReference>
<dbReference type="GO" id="GO:0006508">
    <property type="term" value="P:proteolysis"/>
    <property type="evidence" value="ECO:0007669"/>
    <property type="project" value="UniProtKB-KW"/>
</dbReference>
<dbReference type="CDD" id="cd03879">
    <property type="entry name" value="M28_AAP"/>
    <property type="match status" value="1"/>
</dbReference>
<dbReference type="FunFam" id="2.60.120.380:FF:000013">
    <property type="entry name" value="Alkaline serine protease"/>
    <property type="match status" value="1"/>
</dbReference>
<dbReference type="Gene3D" id="2.60.120.380">
    <property type="match status" value="1"/>
</dbReference>
<dbReference type="Gene3D" id="3.40.630.10">
    <property type="entry name" value="Zn peptidases"/>
    <property type="match status" value="1"/>
</dbReference>
<dbReference type="InterPro" id="IPR045175">
    <property type="entry name" value="M28_fam"/>
</dbReference>
<dbReference type="InterPro" id="IPR012189">
    <property type="entry name" value="Pept_M28E_Ap1"/>
</dbReference>
<dbReference type="InterPro" id="IPR007280">
    <property type="entry name" value="Peptidase_C_arc/bac"/>
</dbReference>
<dbReference type="InterPro" id="IPR007484">
    <property type="entry name" value="Peptidase_M28"/>
</dbReference>
<dbReference type="PANTHER" id="PTHR12147:SF56">
    <property type="entry name" value="AMINOPEPTIDASE YDR415C-RELATED"/>
    <property type="match status" value="1"/>
</dbReference>
<dbReference type="PANTHER" id="PTHR12147">
    <property type="entry name" value="METALLOPEPTIDASE M28 FAMILY MEMBER"/>
    <property type="match status" value="1"/>
</dbReference>
<dbReference type="Pfam" id="PF04389">
    <property type="entry name" value="Peptidase_M28"/>
    <property type="match status" value="1"/>
</dbReference>
<dbReference type="Pfam" id="PF04151">
    <property type="entry name" value="PPC"/>
    <property type="match status" value="1"/>
</dbReference>
<dbReference type="PIRSF" id="PIRSF036685">
    <property type="entry name" value="BacLeuNPeptidase"/>
    <property type="match status" value="1"/>
</dbReference>
<dbReference type="SUPFAM" id="SSF89260">
    <property type="entry name" value="Collagen-binding domain"/>
    <property type="match status" value="1"/>
</dbReference>
<dbReference type="SUPFAM" id="SSF53187">
    <property type="entry name" value="Zn-dependent exopeptidases"/>
    <property type="match status" value="1"/>
</dbReference>
<organism>
    <name type="scientific">Vibrio proteolyticus</name>
    <name type="common">Aeromonas proteolytica</name>
    <dbReference type="NCBI Taxonomy" id="671"/>
    <lineage>
        <taxon>Bacteria</taxon>
        <taxon>Pseudomonadati</taxon>
        <taxon>Pseudomonadota</taxon>
        <taxon>Gammaproteobacteria</taxon>
        <taxon>Vibrionales</taxon>
        <taxon>Vibrionaceae</taxon>
        <taxon>Vibrio</taxon>
    </lineage>
</organism>
<sequence length="504" mass="54232">MKYTKTLLAMVLSATFCQAYAEDKVWISIGADANQTVMKSGAESILPNSVASSGQVWVGQVDVAQLAELSHNMHEEHNRCGGYMVHPSAQSAMAASAMPTTLASFVMPPITQQATVTAWLPQVDASQITGTISSLESFTNRFYTTTSGAQASDWIASEWQALSASLPNASVKQVSHSGYNQKSVVMTITGSEAPDEWIVIGGHLDSTIGSHTNEQSVAPGADDDASGIAAVTEVIRVLSENNFQPKRSIAFMAYAAEEVGLRGSQDLANQYKSEGKNVVSALQLDMTNYKGSAQDVVFITDYTDSNFTQYLTQLMDEYLPSLTYGFDTCGYACSDHASWHNAGYPAAMPFESKFNDYNPRIHTTQDTLANSDPTGSHAKKFTQLGLAYAIEMGSATGDTPTPGNQLEDGVPVTDLSGSRGSNVWYTFELETQKNLQITTSGGYGDLDLYVKFGSKASKQNWDCRPYLSGNNEVCTFNNASPGTYSVMLTGYSNYSGASLKASTF</sequence>
<comment type="catalytic activity">
    <reaction>
        <text>Release of an N-terminal amino acid, preferentially leucine, but not glutamic or aspartic acids.</text>
        <dbReference type="EC" id="3.4.11.10"/>
    </reaction>
</comment>
<comment type="cofactor">
    <cofactor evidence="2 3 6 7">
        <name>Zn(2+)</name>
        <dbReference type="ChEBI" id="CHEBI:29105"/>
    </cofactor>
    <text evidence="2 3 6 7">Binds 2 Zn(2+) ions per subunit.</text>
</comment>
<comment type="subcellular location">
    <subcellularLocation>
        <location evidence="4">Secreted</location>
    </subcellularLocation>
</comment>
<comment type="similarity">
    <text evidence="8">Belongs to the peptidase M28 family. M28E subfamily.</text>
</comment>
<name>AMPX_VIBPR</name>
<keyword id="KW-0002">3D-structure</keyword>
<keyword id="KW-0031">Aminopeptidase</keyword>
<keyword id="KW-0903">Direct protein sequencing</keyword>
<keyword id="KW-1015">Disulfide bond</keyword>
<keyword id="KW-0378">Hydrolase</keyword>
<keyword id="KW-0479">Metal-binding</keyword>
<keyword id="KW-0645">Protease</keyword>
<keyword id="KW-0964">Secreted</keyword>
<keyword id="KW-0732">Signal</keyword>
<keyword id="KW-0862">Zinc</keyword>
<keyword id="KW-0865">Zymogen</keyword>
<evidence type="ECO:0000255" key="1"/>
<evidence type="ECO:0000269" key="2">
    <source>
    </source>
</evidence>
<evidence type="ECO:0000269" key="3">
    <source>
    </source>
</evidence>
<evidence type="ECO:0000269" key="4">
    <source>
    </source>
</evidence>
<evidence type="ECO:0000269" key="5">
    <source>
    </source>
</evidence>
<evidence type="ECO:0000269" key="6">
    <source>
    </source>
</evidence>
<evidence type="ECO:0000269" key="7">
    <source>
    </source>
</evidence>
<evidence type="ECO:0000305" key="8"/>
<evidence type="ECO:0007744" key="9">
    <source>
        <dbReference type="PDB" id="1AMP"/>
    </source>
</evidence>
<evidence type="ECO:0007744" key="10">
    <source>
        <dbReference type="PDB" id="1CP6"/>
    </source>
</evidence>
<evidence type="ECO:0007744" key="11">
    <source>
        <dbReference type="PDB" id="1FT7"/>
    </source>
</evidence>
<evidence type="ECO:0007744" key="12">
    <source>
        <dbReference type="PDB" id="1IGB"/>
    </source>
</evidence>
<evidence type="ECO:0007744" key="13">
    <source>
        <dbReference type="PDB" id="1LOK"/>
    </source>
</evidence>
<evidence type="ECO:0007744" key="14">
    <source>
        <dbReference type="PDB" id="1RTQ"/>
    </source>
</evidence>
<evidence type="ECO:0007744" key="15">
    <source>
        <dbReference type="PDB" id="1TXR"/>
    </source>
</evidence>
<evidence type="ECO:0007744" key="16">
    <source>
        <dbReference type="PDB" id="1XRY"/>
    </source>
</evidence>
<evidence type="ECO:0007744" key="17">
    <source>
        <dbReference type="PDB" id="2ANP"/>
    </source>
</evidence>
<evidence type="ECO:0007744" key="18">
    <source>
        <dbReference type="PDB" id="2DEA"/>
    </source>
</evidence>
<evidence type="ECO:0007744" key="19">
    <source>
        <dbReference type="PDB" id="2IQ6"/>
    </source>
</evidence>
<evidence type="ECO:0007744" key="20">
    <source>
        <dbReference type="PDB" id="2NYQ"/>
    </source>
</evidence>
<evidence type="ECO:0007744" key="21">
    <source>
        <dbReference type="PDB" id="3B35"/>
    </source>
</evidence>
<evidence type="ECO:0007744" key="22">
    <source>
        <dbReference type="PDB" id="3B3C"/>
    </source>
</evidence>
<evidence type="ECO:0007744" key="23">
    <source>
        <dbReference type="PDB" id="3B3S"/>
    </source>
</evidence>
<evidence type="ECO:0007744" key="24">
    <source>
        <dbReference type="PDB" id="3B3T"/>
    </source>
</evidence>
<evidence type="ECO:0007744" key="25">
    <source>
        <dbReference type="PDB" id="3B3V"/>
    </source>
</evidence>
<evidence type="ECO:0007744" key="26">
    <source>
        <dbReference type="PDB" id="3B3W"/>
    </source>
</evidence>
<evidence type="ECO:0007744" key="27">
    <source>
        <dbReference type="PDB" id="3B7I"/>
    </source>
</evidence>
<evidence type="ECO:0007744" key="28">
    <source>
        <dbReference type="PDB" id="3FH4"/>
    </source>
</evidence>
<evidence type="ECO:0007744" key="29">
    <source>
        <dbReference type="PDB" id="3VH9"/>
    </source>
</evidence>
<evidence type="ECO:0007829" key="30">
    <source>
        <dbReference type="PDB" id="1RTQ"/>
    </source>
</evidence>
<evidence type="ECO:0007829" key="31">
    <source>
        <dbReference type="PDB" id="2NYQ"/>
    </source>
</evidence>
<evidence type="ECO:0007829" key="32">
    <source>
        <dbReference type="PDB" id="3B3T"/>
    </source>
</evidence>
<reference key="1">
    <citation type="journal article" date="1992" name="Biochim. Biophys. Acta">
        <title>Cloning and nucleotide sequence of the Vibrio proteolyticus aminopeptidase gene.</title>
        <authorList>
            <person name="van Heeke G."/>
            <person name="Denslow S."/>
            <person name="Watkins J."/>
            <person name="Wilson K."/>
            <person name="Wagner F."/>
        </authorList>
    </citation>
    <scope>NUCLEOTIDE SEQUENCE [GENOMIC DNA]</scope>
    <scope>PROTEIN SEQUENCE OF 107-136 AND 233-405</scope>
    <scope>PROTEOLYTIC PROCESSING</scope>
    <source>
        <strain>ATCC 15338 / DSM 30189 / CCUG 20302 / JCM 21193 / LMG 3772 / NBRC 13287 / NCIMB 1326</strain>
    </source>
</reference>
<reference key="2">
    <citation type="journal article" date="1992" name="J. Biol. Chem.">
        <title>Isolation of the leucine aminopeptidase gene from Aeromonas proteolytica. Evidence for an enzyme precursor.</title>
        <authorList>
            <person name="Guenet C."/>
            <person name="Lepage P."/>
            <person name="Harris B.A."/>
        </authorList>
    </citation>
    <scope>NUCLEOTIDE SEQUENCE [GENOMIC DNA] OF 73-504</scope>
    <scope>SUBCELLULAR LOCATION</scope>
    <scope>PROTEOLYTIC PROCESSING</scope>
</reference>
<reference key="3">
    <citation type="journal article" date="1992" name="Arch. Biochem. Biophys.">
        <title>Rapid purification of the Aeromonas proteolytica aminopeptidase: crystallization and preliminary X-ray data.</title>
        <authorList>
            <person name="Schalk C."/>
            <person name="Remy J.M."/>
            <person name="Chevrier B."/>
            <person name="Moras D."/>
            <person name="Tarnus C."/>
        </authorList>
    </citation>
    <scope>CRYSTALLIZATION</scope>
</reference>
<reference key="4">
    <citation type="journal article" date="1994" name="Structure">
        <title>Crystal structure of Aeromonas proteolytica aminopeptidase: a prototypical member of the co-catalytic zinc enzyme family.</title>
        <authorList>
            <person name="Chevrier B."/>
            <person name="Schalk C."/>
            <person name="D'Orchymont H."/>
            <person name="Rondeau J.-M."/>
            <person name="Moras D."/>
            <person name="Tarnus C."/>
        </authorList>
    </citation>
    <scope>X-RAY CRYSTALLOGRAPHY (1.80 ANGSTROMS) OF 107-397 IN COMPLEX WITH ZINC</scope>
</reference>
<reference key="5">
    <citation type="journal article" date="1996" name="Eur. J. Biochem.">
        <title>The structure of the Aeromonas proteolytica aminopeptidase complexed with a hydroxamate inhibitor. Involvement in catalysis of Glu151 and two zinc ions of the co-catalytic unit.</title>
        <authorList>
            <person name="Chevrier B."/>
            <person name="D'Orchymont H."/>
            <person name="Schalk C."/>
            <person name="Tarnus C."/>
            <person name="Moras D."/>
        </authorList>
    </citation>
    <scope>X-RAY CRYSTALLOGRAPHY (2.30 ANGSTROMS) OF 107-397 IN COMPLEX WITH ZINC AND INHIBITOR</scope>
</reference>
<reference key="6">
    <citation type="journal article" date="1999" name="Biochemistry">
        <title>1-butaneboronic acid binding to Aeromonas proteolytica aminopeptidase: a case of arrested development.</title>
        <authorList>
            <person name="De Paola C.C."/>
            <person name="Bennett B."/>
            <person name="Holz R.C."/>
            <person name="Ringe D."/>
            <person name="Petsko G.A."/>
        </authorList>
    </citation>
    <scope>X-RAY CRYSTALLOGRAPHY (1.90 ANGSTROMS) OF 107-397 IN COMPLEX WITH ZINC AND INHIBITOR</scope>
</reference>
<reference key="7">
    <citation type="journal article" date="2001" name="Biochemistry">
        <title>Inhibition of the aminopeptidase from Aeromonas proteolytica by L-leucinephosphonic acid. Spectroscopic and crystallographic characterization of the transition state of peptide hydrolysis.</title>
        <authorList>
            <person name="Stamper C."/>
            <person name="Bennett B."/>
            <person name="Edwards T."/>
            <person name="Holz R.C."/>
            <person name="Ringe D."/>
            <person name="Petsko G.A."/>
        </authorList>
    </citation>
    <scope>X-RAY CRYSTALLOGRAPHY (2.20 ANGSTROMS) OF 107-397 IN COMPLEX WITH ZINC AND INHIBITOR</scope>
</reference>
<feature type="signal peptide" evidence="1">
    <location>
        <begin position="1"/>
        <end position="21"/>
    </location>
</feature>
<feature type="propeptide" id="PRO_0000026849" evidence="4 5">
    <location>
        <begin position="22"/>
        <end position="106"/>
    </location>
</feature>
<feature type="chain" id="PRO_0000026850" description="Bacterial leucyl aminopeptidase">
    <location>
        <begin position="107"/>
        <end position="405"/>
    </location>
</feature>
<feature type="propeptide" id="PRO_0000026851" description="Removed in mature form" evidence="5">
    <location>
        <begin position="406"/>
        <end position="504"/>
    </location>
</feature>
<feature type="binding site" evidence="2 3 6 7 9 10 11 12 13 14 15 16 17 18 19 20 21 22 23 24 25 26 27 28 29">
    <location>
        <position position="203"/>
    </location>
    <ligand>
        <name>Zn(2+)</name>
        <dbReference type="ChEBI" id="CHEBI:29105"/>
        <label>1</label>
    </ligand>
</feature>
<feature type="binding site" evidence="2 3 6 7 9 10 11 12 13 14 15 16 17 18 19 20 21 22 23 24 25 26 27 28 29">
    <location>
        <position position="223"/>
    </location>
    <ligand>
        <name>Zn(2+)</name>
        <dbReference type="ChEBI" id="CHEBI:29105"/>
        <label>1</label>
    </ligand>
</feature>
<feature type="binding site" evidence="2 3 6 7 9 10 11 12 13 14 15 16 17 18 19 20 21 22 23 24 25 26 27 28 29">
    <location>
        <position position="223"/>
    </location>
    <ligand>
        <name>Zn(2+)</name>
        <dbReference type="ChEBI" id="CHEBI:29105"/>
        <label>2</label>
        <note>catalytic</note>
    </ligand>
</feature>
<feature type="binding site" evidence="2 3 6 7 9 10 11 12 13 14 15 16 17 18 19 20 21 22 23 24 25 26 27 28 29">
    <location>
        <position position="258"/>
    </location>
    <ligand>
        <name>Zn(2+)</name>
        <dbReference type="ChEBI" id="CHEBI:29105"/>
        <label>2</label>
        <note>catalytic</note>
    </ligand>
</feature>
<feature type="binding site" evidence="2 3 6 7 9 10 11 12 13 14 15 16 17 18 19 20 21 22 23 24 25 26 27 28 29">
    <location>
        <position position="285"/>
    </location>
    <ligand>
        <name>Zn(2+)</name>
        <dbReference type="ChEBI" id="CHEBI:29105"/>
        <label>1</label>
    </ligand>
</feature>
<feature type="binding site" evidence="2 3 6 7 9 10 11 12 13 14 15 16 17 18 19 20 21 22 23 24 25 26 27 28 29">
    <location>
        <position position="362"/>
    </location>
    <ligand>
        <name>Zn(2+)</name>
        <dbReference type="ChEBI" id="CHEBI:29105"/>
        <label>2</label>
        <note>catalytic</note>
    </ligand>
</feature>
<feature type="disulfide bond" evidence="2 3 6 7 9 10 11 12">
    <location>
        <begin position="329"/>
        <end position="333"/>
    </location>
</feature>
<feature type="sequence conflict" description="In Ref. 1; AA sequence." evidence="8" ref="1">
    <original>TD</original>
    <variation>DT</variation>
    <location>
        <begin position="303"/>
        <end position="304"/>
    </location>
</feature>
<feature type="sequence conflict" description="In Ref. 1; AA sequence." evidence="8" ref="1">
    <original>N</original>
    <variation>D</variation>
    <location>
        <position position="306"/>
    </location>
</feature>
<feature type="sequence conflict" description="In Ref. 1; AA sequence." evidence="8" ref="1">
    <original>TQL</original>
    <variation>QT</variation>
    <location>
        <begin position="312"/>
        <end position="314"/>
    </location>
</feature>
<feature type="helix" evidence="30">
    <location>
        <begin position="113"/>
        <end position="119"/>
    </location>
</feature>
<feature type="helix" evidence="30">
    <location>
        <begin position="120"/>
        <end position="122"/>
    </location>
</feature>
<feature type="helix" evidence="30">
    <location>
        <begin position="125"/>
        <end position="136"/>
    </location>
</feature>
<feature type="helix" evidence="30">
    <location>
        <begin position="146"/>
        <end position="163"/>
    </location>
</feature>
<feature type="strand" evidence="31">
    <location>
        <begin position="164"/>
        <end position="166"/>
    </location>
</feature>
<feature type="strand" evidence="30">
    <location>
        <begin position="169"/>
        <end position="176"/>
    </location>
</feature>
<feature type="strand" evidence="30">
    <location>
        <begin position="179"/>
        <end position="188"/>
    </location>
</feature>
<feature type="strand" evidence="30">
    <location>
        <begin position="191"/>
        <end position="203"/>
    </location>
</feature>
<feature type="turn" evidence="30">
    <location>
        <begin position="221"/>
        <end position="224"/>
    </location>
</feature>
<feature type="helix" evidence="30">
    <location>
        <begin position="225"/>
        <end position="240"/>
    </location>
</feature>
<feature type="strand" evidence="30">
    <location>
        <begin position="246"/>
        <end position="255"/>
    </location>
</feature>
<feature type="helix" evidence="30">
    <location>
        <begin position="257"/>
        <end position="259"/>
    </location>
</feature>
<feature type="helix" evidence="30">
    <location>
        <begin position="262"/>
        <end position="273"/>
    </location>
</feature>
<feature type="strand" evidence="30">
    <location>
        <begin position="277"/>
        <end position="283"/>
    </location>
</feature>
<feature type="strand" evidence="30">
    <location>
        <begin position="292"/>
        <end position="299"/>
    </location>
</feature>
<feature type="strand" evidence="32">
    <location>
        <begin position="301"/>
        <end position="303"/>
    </location>
</feature>
<feature type="helix" evidence="30">
    <location>
        <begin position="305"/>
        <end position="318"/>
    </location>
</feature>
<feature type="strand" evidence="30">
    <location>
        <begin position="324"/>
        <end position="327"/>
    </location>
</feature>
<feature type="helix" evidence="30">
    <location>
        <begin position="336"/>
        <end position="341"/>
    </location>
</feature>
<feature type="strand" evidence="30">
    <location>
        <begin position="349"/>
        <end position="352"/>
    </location>
</feature>
<feature type="helix" evidence="30">
    <location>
        <begin position="354"/>
        <end position="356"/>
    </location>
</feature>
<feature type="turn" evidence="30">
    <location>
        <begin position="359"/>
        <end position="362"/>
    </location>
</feature>
<feature type="helix" evidence="30">
    <location>
        <begin position="368"/>
        <end position="370"/>
    </location>
</feature>
<feature type="helix" evidence="30">
    <location>
        <begin position="376"/>
        <end position="394"/>
    </location>
</feature>
<proteinExistence type="evidence at protein level"/>
<protein>
    <recommendedName>
        <fullName>Bacterial leucyl aminopeptidase</fullName>
        <ecNumber>3.4.11.10</ecNumber>
    </recommendedName>
</protein>